<sequence length="323" mass="37037">MIDFGNFYSLIAKNHLSHWLETLPAQIANWQREQQHGLFKQWSNAVEFLPEIKPYRLDLLHSVTAESEEPLSAGQIKRIETLMRNLMPWRKGPFSLYGVNIDTEWRSDWKWDRVLPHLSDLTGRTILDVGCGSGYHMWRMIGAGAHLAVGIDPTQLFLCQFEAVRKLLGNDQRAHLLPLGIEQLPALKAFDTVFSMGVLYHRRSPLEHLWQLKDQLVNEGELVLETLVIDGDENTVLVPGDRYAQMRNVYFIPSALALKNWLKKCGFVDIRIADVSVTTTEEQRRTEWMVTESLADFLDPHDPSKTVEGYPAPKRAVLIARKP</sequence>
<accession>B7NS47</accession>
<organism>
    <name type="scientific">Escherichia coli O7:K1 (strain IAI39 / ExPEC)</name>
    <dbReference type="NCBI Taxonomy" id="585057"/>
    <lineage>
        <taxon>Bacteria</taxon>
        <taxon>Pseudomonadati</taxon>
        <taxon>Pseudomonadota</taxon>
        <taxon>Gammaproteobacteria</taxon>
        <taxon>Enterobacterales</taxon>
        <taxon>Enterobacteriaceae</taxon>
        <taxon>Escherichia</taxon>
    </lineage>
</organism>
<dbReference type="EC" id="2.5.1.-" evidence="1"/>
<dbReference type="EMBL" id="CU928164">
    <property type="protein sequence ID" value="CAR17312.1"/>
    <property type="molecule type" value="Genomic_DNA"/>
</dbReference>
<dbReference type="RefSeq" id="WP_000564726.1">
    <property type="nucleotide sequence ID" value="NC_011750.1"/>
</dbReference>
<dbReference type="RefSeq" id="YP_002407186.1">
    <property type="nucleotide sequence ID" value="NC_011750.1"/>
</dbReference>
<dbReference type="SMR" id="B7NS47"/>
<dbReference type="STRING" id="585057.ECIAI39_1178"/>
<dbReference type="KEGG" id="ect:ECIAI39_1178"/>
<dbReference type="PATRIC" id="fig|585057.6.peg.1235"/>
<dbReference type="HOGENOM" id="CLU_052665_0_0_6"/>
<dbReference type="Proteomes" id="UP000000749">
    <property type="component" value="Chromosome"/>
</dbReference>
<dbReference type="GO" id="GO:0008168">
    <property type="term" value="F:methyltransferase activity"/>
    <property type="evidence" value="ECO:0007669"/>
    <property type="project" value="TreeGrafter"/>
</dbReference>
<dbReference type="GO" id="GO:0016765">
    <property type="term" value="F:transferase activity, transferring alkyl or aryl (other than methyl) groups"/>
    <property type="evidence" value="ECO:0007669"/>
    <property type="project" value="UniProtKB-UniRule"/>
</dbReference>
<dbReference type="GO" id="GO:0002098">
    <property type="term" value="P:tRNA wobble uridine modification"/>
    <property type="evidence" value="ECO:0007669"/>
    <property type="project" value="InterPro"/>
</dbReference>
<dbReference type="CDD" id="cd02440">
    <property type="entry name" value="AdoMet_MTases"/>
    <property type="match status" value="1"/>
</dbReference>
<dbReference type="FunFam" id="3.40.50.150:FF:000080">
    <property type="entry name" value="tRNA U34 carboxymethyltransferase"/>
    <property type="match status" value="1"/>
</dbReference>
<dbReference type="Gene3D" id="3.40.50.150">
    <property type="entry name" value="Vaccinia Virus protein VP39"/>
    <property type="match status" value="1"/>
</dbReference>
<dbReference type="HAMAP" id="MF_01590">
    <property type="entry name" value="tRNA_carboxymethyltr_CmoB"/>
    <property type="match status" value="1"/>
</dbReference>
<dbReference type="InterPro" id="IPR010017">
    <property type="entry name" value="CmoB"/>
</dbReference>
<dbReference type="InterPro" id="IPR027555">
    <property type="entry name" value="Mo5U34_MeTrfas-like"/>
</dbReference>
<dbReference type="InterPro" id="IPR029063">
    <property type="entry name" value="SAM-dependent_MTases_sf"/>
</dbReference>
<dbReference type="NCBIfam" id="NF011650">
    <property type="entry name" value="PRK15068.1"/>
    <property type="match status" value="1"/>
</dbReference>
<dbReference type="NCBIfam" id="TIGR00452">
    <property type="entry name" value="tRNA 5-methoxyuridine(34)/uridine 5-oxyacetic acid(34) synthase CmoB"/>
    <property type="match status" value="1"/>
</dbReference>
<dbReference type="PANTHER" id="PTHR43464">
    <property type="entry name" value="METHYLTRANSFERASE"/>
    <property type="match status" value="1"/>
</dbReference>
<dbReference type="PANTHER" id="PTHR43464:SF95">
    <property type="entry name" value="TRNA U34 CARBOXYMETHYLTRANSFERASE"/>
    <property type="match status" value="1"/>
</dbReference>
<dbReference type="Pfam" id="PF08003">
    <property type="entry name" value="Methyltransf_9"/>
    <property type="match status" value="1"/>
</dbReference>
<dbReference type="SUPFAM" id="SSF53335">
    <property type="entry name" value="S-adenosyl-L-methionine-dependent methyltransferases"/>
    <property type="match status" value="1"/>
</dbReference>
<keyword id="KW-0808">Transferase</keyword>
<keyword id="KW-0819">tRNA processing</keyword>
<proteinExistence type="inferred from homology"/>
<evidence type="ECO:0000255" key="1">
    <source>
        <dbReference type="HAMAP-Rule" id="MF_01590"/>
    </source>
</evidence>
<feature type="chain" id="PRO_1000201295" description="tRNA U34 carboxymethyltransferase">
    <location>
        <begin position="1"/>
        <end position="323"/>
    </location>
</feature>
<feature type="binding site" evidence="1">
    <location>
        <position position="91"/>
    </location>
    <ligand>
        <name>carboxy-S-adenosyl-L-methionine</name>
        <dbReference type="ChEBI" id="CHEBI:134278"/>
    </ligand>
</feature>
<feature type="binding site" evidence="1">
    <location>
        <position position="105"/>
    </location>
    <ligand>
        <name>carboxy-S-adenosyl-L-methionine</name>
        <dbReference type="ChEBI" id="CHEBI:134278"/>
    </ligand>
</feature>
<feature type="binding site" evidence="1">
    <location>
        <position position="110"/>
    </location>
    <ligand>
        <name>carboxy-S-adenosyl-L-methionine</name>
        <dbReference type="ChEBI" id="CHEBI:134278"/>
    </ligand>
</feature>
<feature type="binding site" evidence="1">
    <location>
        <position position="130"/>
    </location>
    <ligand>
        <name>carboxy-S-adenosyl-L-methionine</name>
        <dbReference type="ChEBI" id="CHEBI:134278"/>
    </ligand>
</feature>
<feature type="binding site" evidence="1">
    <location>
        <begin position="152"/>
        <end position="154"/>
    </location>
    <ligand>
        <name>carboxy-S-adenosyl-L-methionine</name>
        <dbReference type="ChEBI" id="CHEBI:134278"/>
    </ligand>
</feature>
<feature type="binding site" evidence="1">
    <location>
        <begin position="181"/>
        <end position="182"/>
    </location>
    <ligand>
        <name>carboxy-S-adenosyl-L-methionine</name>
        <dbReference type="ChEBI" id="CHEBI:134278"/>
    </ligand>
</feature>
<feature type="binding site" evidence="1">
    <location>
        <position position="196"/>
    </location>
    <ligand>
        <name>carboxy-S-adenosyl-L-methionine</name>
        <dbReference type="ChEBI" id="CHEBI:134278"/>
    </ligand>
</feature>
<feature type="binding site" evidence="1">
    <location>
        <position position="200"/>
    </location>
    <ligand>
        <name>carboxy-S-adenosyl-L-methionine</name>
        <dbReference type="ChEBI" id="CHEBI:134278"/>
    </ligand>
</feature>
<feature type="binding site" evidence="1">
    <location>
        <position position="315"/>
    </location>
    <ligand>
        <name>carboxy-S-adenosyl-L-methionine</name>
        <dbReference type="ChEBI" id="CHEBI:134278"/>
    </ligand>
</feature>
<comment type="function">
    <text evidence="1">Catalyzes carboxymethyl transfer from carboxy-S-adenosyl-L-methionine (Cx-SAM) to 5-hydroxyuridine (ho5U) to form 5-carboxymethoxyuridine (cmo5U) at position 34 in tRNAs.</text>
</comment>
<comment type="catalytic activity">
    <reaction evidence="1">
        <text>carboxy-S-adenosyl-L-methionine + 5-hydroxyuridine(34) in tRNA = 5-carboxymethoxyuridine(34) in tRNA + S-adenosyl-L-homocysteine + H(+)</text>
        <dbReference type="Rhea" id="RHEA:52848"/>
        <dbReference type="Rhea" id="RHEA-COMP:13381"/>
        <dbReference type="Rhea" id="RHEA-COMP:13383"/>
        <dbReference type="ChEBI" id="CHEBI:15378"/>
        <dbReference type="ChEBI" id="CHEBI:57856"/>
        <dbReference type="ChEBI" id="CHEBI:134278"/>
        <dbReference type="ChEBI" id="CHEBI:136877"/>
        <dbReference type="ChEBI" id="CHEBI:136879"/>
    </reaction>
</comment>
<comment type="subunit">
    <text evidence="1">Homotetramer.</text>
</comment>
<comment type="similarity">
    <text evidence="1">Belongs to the class I-like SAM-binding methyltransferase superfamily. CmoB family.</text>
</comment>
<protein>
    <recommendedName>
        <fullName evidence="1">tRNA U34 carboxymethyltransferase</fullName>
        <ecNumber evidence="1">2.5.1.-</ecNumber>
    </recommendedName>
</protein>
<name>CMOB_ECO7I</name>
<reference key="1">
    <citation type="journal article" date="2009" name="PLoS Genet.">
        <title>Organised genome dynamics in the Escherichia coli species results in highly diverse adaptive paths.</title>
        <authorList>
            <person name="Touchon M."/>
            <person name="Hoede C."/>
            <person name="Tenaillon O."/>
            <person name="Barbe V."/>
            <person name="Baeriswyl S."/>
            <person name="Bidet P."/>
            <person name="Bingen E."/>
            <person name="Bonacorsi S."/>
            <person name="Bouchier C."/>
            <person name="Bouvet O."/>
            <person name="Calteau A."/>
            <person name="Chiapello H."/>
            <person name="Clermont O."/>
            <person name="Cruveiller S."/>
            <person name="Danchin A."/>
            <person name="Diard M."/>
            <person name="Dossat C."/>
            <person name="Karoui M.E."/>
            <person name="Frapy E."/>
            <person name="Garry L."/>
            <person name="Ghigo J.M."/>
            <person name="Gilles A.M."/>
            <person name="Johnson J."/>
            <person name="Le Bouguenec C."/>
            <person name="Lescat M."/>
            <person name="Mangenot S."/>
            <person name="Martinez-Jehanne V."/>
            <person name="Matic I."/>
            <person name="Nassif X."/>
            <person name="Oztas S."/>
            <person name="Petit M.A."/>
            <person name="Pichon C."/>
            <person name="Rouy Z."/>
            <person name="Ruf C.S."/>
            <person name="Schneider D."/>
            <person name="Tourret J."/>
            <person name="Vacherie B."/>
            <person name="Vallenet D."/>
            <person name="Medigue C."/>
            <person name="Rocha E.P.C."/>
            <person name="Denamur E."/>
        </authorList>
    </citation>
    <scope>NUCLEOTIDE SEQUENCE [LARGE SCALE GENOMIC DNA]</scope>
    <source>
        <strain>IAI39 / ExPEC</strain>
    </source>
</reference>
<gene>
    <name evidence="1" type="primary">cmoB</name>
    <name type="ordered locus">ECIAI39_1178</name>
</gene>